<comment type="function">
    <text evidence="1">As a subunit of eukaryotic initiation factor 2 eIF2, involved in the early steps of protein synthesis. In the presence of GTP, eIF-2 forms a ternary complex with initiator tRNA Met-tRNAi and then recruits the 40S ribosomal complex and initiation factors eIF-1, eIF-1A and eIF-3 to form the 43S pre-initiation complex (43S PIC), a step that determines the rate of protein translation. The 43S PIC binds to mRNA and scans downstream to the initiation codon, where it forms a 48S initiation complex by codon-anticodon base pairing. This leads to the displacement of eIF-1 to allow GTPase-activating protein (GAP) eIF-5-mediated hydrolysis of eIF2-bound GTP. Hydrolysis of GTP and release of Pi, which makes GTP hydrolysis irreversible, causes the release of the eIF-2-GDP binary complex from the 40S subunit, an event that is essential for the subsequent joining of the 60S ribosomal subunit to form an elongation-competent 80S ribosome. In order for eIF-2 to recycle and catalyze another round of initiation, the GDP bound to eIF-2 must be exchanged with GTP by way of a reaction catalyzed by GDP-GTP exchange factor (GEF) eIF-2B.</text>
</comment>
<comment type="catalytic activity">
    <reaction evidence="1">
        <text>GTP + H2O = GDP + phosphate + H(+)</text>
        <dbReference type="Rhea" id="RHEA:19669"/>
        <dbReference type="ChEBI" id="CHEBI:15377"/>
        <dbReference type="ChEBI" id="CHEBI:15378"/>
        <dbReference type="ChEBI" id="CHEBI:37565"/>
        <dbReference type="ChEBI" id="CHEBI:43474"/>
        <dbReference type="ChEBI" id="CHEBI:58189"/>
        <dbReference type="EC" id="3.6.5.3"/>
    </reaction>
</comment>
<comment type="subunit">
    <text evidence="1">Eukaryotic translation initiation factor 2 eIF2 is a heterotrimeric complex composed of an alpha, a beta and a gamma subunit. The factors eIF-1, eIF-2, eIF-3, TIF5/eIF-5 and methionyl-tRNAi form a multifactor complex (MFC) that may bind to the 40S ribosome.</text>
</comment>
<comment type="subcellular location">
    <subcellularLocation>
        <location evidence="3">Cytoplasm</location>
        <location evidence="3">Cytosol</location>
    </subcellularLocation>
</comment>
<comment type="alternative products">
    <event type="alternative splicing"/>
    <isoform>
        <id>Q24208-1</id>
        <name>B</name>
        <name>eIF-2gamma</name>
        <sequence type="displayed"/>
    </isoform>
    <isoform>
        <id>Q24208-2</id>
        <name>C</name>
        <sequence type="described" ref="VSP_001432"/>
    </isoform>
</comment>
<comment type="developmental stage">
    <text evidence="5">Isoform B expressed maternally and zygotically. Isoform B expressed throughout development, in larvae, in pupae and in adult flies.</text>
</comment>
<comment type="similarity">
    <text evidence="4">Belongs to the TRAFAC class translation factor GTPase superfamily. Classic translation factor GTPase family. EIF2G subfamily.</text>
</comment>
<feature type="chain" id="PRO_0000137444" description="Eukaryotic translation initiation factor 2 subunit 3">
    <location>
        <begin position="1"/>
        <end position="475"/>
    </location>
</feature>
<feature type="domain" description="tr-type G" evidence="4">
    <location>
        <begin position="38"/>
        <end position="247"/>
    </location>
</feature>
<feature type="region of interest" description="G1" evidence="4">
    <location>
        <begin position="47"/>
        <end position="54"/>
    </location>
</feature>
<feature type="region of interest" description="G2" evidence="4">
    <location>
        <begin position="75"/>
        <end position="79"/>
    </location>
</feature>
<feature type="region of interest" description="G3" evidence="4">
    <location>
        <begin position="133"/>
        <end position="136"/>
    </location>
</feature>
<feature type="region of interest" description="G4" evidence="4">
    <location>
        <begin position="189"/>
        <end position="192"/>
    </location>
</feature>
<feature type="region of interest" description="G5" evidence="4">
    <location>
        <begin position="224"/>
        <end position="226"/>
    </location>
</feature>
<feature type="region of interest" description="Interacts with CDC123" evidence="2">
    <location>
        <begin position="456"/>
        <end position="468"/>
    </location>
</feature>
<feature type="binding site" evidence="1">
    <location>
        <begin position="50"/>
        <end position="55"/>
    </location>
    <ligand>
        <name>GTP</name>
        <dbReference type="ChEBI" id="CHEBI:37565"/>
    </ligand>
</feature>
<feature type="binding site" evidence="1">
    <location>
        <begin position="189"/>
        <end position="192"/>
    </location>
    <ligand>
        <name>GTP</name>
        <dbReference type="ChEBI" id="CHEBI:37565"/>
    </ligand>
</feature>
<feature type="binding site" evidence="1">
    <location>
        <begin position="224"/>
        <end position="226"/>
    </location>
    <ligand>
        <name>GTP</name>
        <dbReference type="ChEBI" id="CHEBI:37565"/>
    </ligand>
</feature>
<feature type="splice variant" id="VSP_001432" description="In isoform C." evidence="6">
    <original>MATAEAQIGVNRNLQKQDLSNL</original>
    <variation>MHLRGDVLLGGVAA</variation>
    <location>
        <begin position="1"/>
        <end position="22"/>
    </location>
</feature>
<protein>
    <recommendedName>
        <fullName>Eukaryotic translation initiation factor 2 subunit 3</fullName>
        <ecNumber evidence="1">3.6.5.3</ecNumber>
    </recommendedName>
    <alternativeName>
        <fullName>Eukaryotic translation initiation factor 2 subunit gamma</fullName>
        <shortName>eIF2-gamma</shortName>
    </alternativeName>
</protein>
<reference key="1">
    <citation type="journal article" date="1994" name="EMBO J.">
        <title>The protein encoded by the Drosophila position-effect variegation suppressor gene Su(var)3-9 combines domains of antagonistic regulators of homeotic gene complexes.</title>
        <authorList>
            <person name="Tschiersch B."/>
            <person name="Hofmann A."/>
            <person name="Krauss V."/>
            <person name="Dorn R."/>
            <person name="Korge G."/>
            <person name="Reuter G."/>
        </authorList>
    </citation>
    <scope>NUCLEOTIDE SEQUENCE [MRNA] (ISOFORM B)</scope>
    <scope>DEVELOPMENTAL STAGE</scope>
    <source>
        <strain>Oregon-R</strain>
    </source>
</reference>
<reference key="2">
    <citation type="journal article" date="2000" name="Genetics">
        <title>Two genes become one: the genes encoding heterochromatin protein Su(var)3-9 and translation initiation factor subunit eIF-2gamma are joined to a dicistronic unit in holometabolic insects.</title>
        <authorList>
            <person name="Krauss V."/>
            <person name="Reuter G."/>
        </authorList>
    </citation>
    <scope>NUCLEOTIDE SEQUENCE [GENOMIC DNA]</scope>
    <source>
        <strain>Karsnas</strain>
    </source>
</reference>
<reference key="3">
    <citation type="journal article" date="2000" name="Science">
        <title>The genome sequence of Drosophila melanogaster.</title>
        <authorList>
            <person name="Adams M.D."/>
            <person name="Celniker S.E."/>
            <person name="Holt R.A."/>
            <person name="Evans C.A."/>
            <person name="Gocayne J.D."/>
            <person name="Amanatides P.G."/>
            <person name="Scherer S.E."/>
            <person name="Li P.W."/>
            <person name="Hoskins R.A."/>
            <person name="Galle R.F."/>
            <person name="George R.A."/>
            <person name="Lewis S.E."/>
            <person name="Richards S."/>
            <person name="Ashburner M."/>
            <person name="Henderson S.N."/>
            <person name="Sutton G.G."/>
            <person name="Wortman J.R."/>
            <person name="Yandell M.D."/>
            <person name="Zhang Q."/>
            <person name="Chen L.X."/>
            <person name="Brandon R.C."/>
            <person name="Rogers Y.-H.C."/>
            <person name="Blazej R.G."/>
            <person name="Champe M."/>
            <person name="Pfeiffer B.D."/>
            <person name="Wan K.H."/>
            <person name="Doyle C."/>
            <person name="Baxter E.G."/>
            <person name="Helt G."/>
            <person name="Nelson C.R."/>
            <person name="Miklos G.L.G."/>
            <person name="Abril J.F."/>
            <person name="Agbayani A."/>
            <person name="An H.-J."/>
            <person name="Andrews-Pfannkoch C."/>
            <person name="Baldwin D."/>
            <person name="Ballew R.M."/>
            <person name="Basu A."/>
            <person name="Baxendale J."/>
            <person name="Bayraktaroglu L."/>
            <person name="Beasley E.M."/>
            <person name="Beeson K.Y."/>
            <person name="Benos P.V."/>
            <person name="Berman B.P."/>
            <person name="Bhandari D."/>
            <person name="Bolshakov S."/>
            <person name="Borkova D."/>
            <person name="Botchan M.R."/>
            <person name="Bouck J."/>
            <person name="Brokstein P."/>
            <person name="Brottier P."/>
            <person name="Burtis K.C."/>
            <person name="Busam D.A."/>
            <person name="Butler H."/>
            <person name="Cadieu E."/>
            <person name="Center A."/>
            <person name="Chandra I."/>
            <person name="Cherry J.M."/>
            <person name="Cawley S."/>
            <person name="Dahlke C."/>
            <person name="Davenport L.B."/>
            <person name="Davies P."/>
            <person name="de Pablos B."/>
            <person name="Delcher A."/>
            <person name="Deng Z."/>
            <person name="Mays A.D."/>
            <person name="Dew I."/>
            <person name="Dietz S.M."/>
            <person name="Dodson K."/>
            <person name="Doup L.E."/>
            <person name="Downes M."/>
            <person name="Dugan-Rocha S."/>
            <person name="Dunkov B.C."/>
            <person name="Dunn P."/>
            <person name="Durbin K.J."/>
            <person name="Evangelista C.C."/>
            <person name="Ferraz C."/>
            <person name="Ferriera S."/>
            <person name="Fleischmann W."/>
            <person name="Fosler C."/>
            <person name="Gabrielian A.E."/>
            <person name="Garg N.S."/>
            <person name="Gelbart W.M."/>
            <person name="Glasser K."/>
            <person name="Glodek A."/>
            <person name="Gong F."/>
            <person name="Gorrell J.H."/>
            <person name="Gu Z."/>
            <person name="Guan P."/>
            <person name="Harris M."/>
            <person name="Harris N.L."/>
            <person name="Harvey D.A."/>
            <person name="Heiman T.J."/>
            <person name="Hernandez J.R."/>
            <person name="Houck J."/>
            <person name="Hostin D."/>
            <person name="Houston K.A."/>
            <person name="Howland T.J."/>
            <person name="Wei M.-H."/>
            <person name="Ibegwam C."/>
            <person name="Jalali M."/>
            <person name="Kalush F."/>
            <person name="Karpen G.H."/>
            <person name="Ke Z."/>
            <person name="Kennison J.A."/>
            <person name="Ketchum K.A."/>
            <person name="Kimmel B.E."/>
            <person name="Kodira C.D."/>
            <person name="Kraft C.L."/>
            <person name="Kravitz S."/>
            <person name="Kulp D."/>
            <person name="Lai Z."/>
            <person name="Lasko P."/>
            <person name="Lei Y."/>
            <person name="Levitsky A.A."/>
            <person name="Li J.H."/>
            <person name="Li Z."/>
            <person name="Liang Y."/>
            <person name="Lin X."/>
            <person name="Liu X."/>
            <person name="Mattei B."/>
            <person name="McIntosh T.C."/>
            <person name="McLeod M.P."/>
            <person name="McPherson D."/>
            <person name="Merkulov G."/>
            <person name="Milshina N.V."/>
            <person name="Mobarry C."/>
            <person name="Morris J."/>
            <person name="Moshrefi A."/>
            <person name="Mount S.M."/>
            <person name="Moy M."/>
            <person name="Murphy B."/>
            <person name="Murphy L."/>
            <person name="Muzny D.M."/>
            <person name="Nelson D.L."/>
            <person name="Nelson D.R."/>
            <person name="Nelson K.A."/>
            <person name="Nixon K."/>
            <person name="Nusskern D.R."/>
            <person name="Pacleb J.M."/>
            <person name="Palazzolo M."/>
            <person name="Pittman G.S."/>
            <person name="Pan S."/>
            <person name="Pollard J."/>
            <person name="Puri V."/>
            <person name="Reese M.G."/>
            <person name="Reinert K."/>
            <person name="Remington K."/>
            <person name="Saunders R.D.C."/>
            <person name="Scheeler F."/>
            <person name="Shen H."/>
            <person name="Shue B.C."/>
            <person name="Siden-Kiamos I."/>
            <person name="Simpson M."/>
            <person name="Skupski M.P."/>
            <person name="Smith T.J."/>
            <person name="Spier E."/>
            <person name="Spradling A.C."/>
            <person name="Stapleton M."/>
            <person name="Strong R."/>
            <person name="Sun E."/>
            <person name="Svirskas R."/>
            <person name="Tector C."/>
            <person name="Turner R."/>
            <person name="Venter E."/>
            <person name="Wang A.H."/>
            <person name="Wang X."/>
            <person name="Wang Z.-Y."/>
            <person name="Wassarman D.A."/>
            <person name="Weinstock G.M."/>
            <person name="Weissenbach J."/>
            <person name="Williams S.M."/>
            <person name="Woodage T."/>
            <person name="Worley K.C."/>
            <person name="Wu D."/>
            <person name="Yang S."/>
            <person name="Yao Q.A."/>
            <person name="Ye J."/>
            <person name="Yeh R.-F."/>
            <person name="Zaveri J.S."/>
            <person name="Zhan M."/>
            <person name="Zhang G."/>
            <person name="Zhao Q."/>
            <person name="Zheng L."/>
            <person name="Zheng X.H."/>
            <person name="Zhong F.N."/>
            <person name="Zhong W."/>
            <person name="Zhou X."/>
            <person name="Zhu S.C."/>
            <person name="Zhu X."/>
            <person name="Smith H.O."/>
            <person name="Gibbs R.A."/>
            <person name="Myers E.W."/>
            <person name="Rubin G.M."/>
            <person name="Venter J.C."/>
        </authorList>
    </citation>
    <scope>NUCLEOTIDE SEQUENCE [LARGE SCALE GENOMIC DNA]</scope>
    <source>
        <strain>Berkeley</strain>
    </source>
</reference>
<reference key="4">
    <citation type="journal article" date="2002" name="Genome Biol.">
        <title>Annotation of the Drosophila melanogaster euchromatic genome: a systematic review.</title>
        <authorList>
            <person name="Misra S."/>
            <person name="Crosby M.A."/>
            <person name="Mungall C.J."/>
            <person name="Matthews B.B."/>
            <person name="Campbell K.S."/>
            <person name="Hradecky P."/>
            <person name="Huang Y."/>
            <person name="Kaminker J.S."/>
            <person name="Millburn G.H."/>
            <person name="Prochnik S.E."/>
            <person name="Smith C.D."/>
            <person name="Tupy J.L."/>
            <person name="Whitfield E.J."/>
            <person name="Bayraktaroglu L."/>
            <person name="Berman B.P."/>
            <person name="Bettencourt B.R."/>
            <person name="Celniker S.E."/>
            <person name="de Grey A.D.N.J."/>
            <person name="Drysdale R.A."/>
            <person name="Harris N.L."/>
            <person name="Richter J."/>
            <person name="Russo S."/>
            <person name="Schroeder A.J."/>
            <person name="Shu S.Q."/>
            <person name="Stapleton M."/>
            <person name="Yamada C."/>
            <person name="Ashburner M."/>
            <person name="Gelbart W.M."/>
            <person name="Rubin G.M."/>
            <person name="Lewis S.E."/>
        </authorList>
    </citation>
    <scope>GENOME REANNOTATION</scope>
    <scope>ALTERNATIVE SPLICING</scope>
    <source>
        <strain>Berkeley</strain>
    </source>
</reference>
<reference key="5">
    <citation type="journal article" date="2002" name="Genome Biol.">
        <title>A Drosophila full-length cDNA resource.</title>
        <authorList>
            <person name="Stapleton M."/>
            <person name="Carlson J.W."/>
            <person name="Brokstein P."/>
            <person name="Yu C."/>
            <person name="Champe M."/>
            <person name="George R.A."/>
            <person name="Guarin H."/>
            <person name="Kronmiller B."/>
            <person name="Pacleb J.M."/>
            <person name="Park S."/>
            <person name="Wan K.H."/>
            <person name="Rubin G.M."/>
            <person name="Celniker S.E."/>
        </authorList>
    </citation>
    <scope>NUCLEOTIDE SEQUENCE [LARGE SCALE MRNA] (ISOFORM B)</scope>
    <source>
        <strain>Berkeley</strain>
        <tissue>Embryo</tissue>
    </source>
</reference>
<accession>Q24208</accession>
<accession>Q9VFA7</accession>
<keyword id="KW-0025">Alternative splicing</keyword>
<keyword id="KW-0963">Cytoplasm</keyword>
<keyword id="KW-0342">GTP-binding</keyword>
<keyword id="KW-0378">Hydrolase</keyword>
<keyword id="KW-0396">Initiation factor</keyword>
<keyword id="KW-0547">Nucleotide-binding</keyword>
<keyword id="KW-0648">Protein biosynthesis</keyword>
<keyword id="KW-1185">Reference proteome</keyword>
<proteinExistence type="evidence at transcript level"/>
<evidence type="ECO:0000250" key="1">
    <source>
        <dbReference type="UniProtKB" id="P32481"/>
    </source>
</evidence>
<evidence type="ECO:0000250" key="2">
    <source>
        <dbReference type="UniProtKB" id="P41091"/>
    </source>
</evidence>
<evidence type="ECO:0000250" key="3">
    <source>
        <dbReference type="UniProtKB" id="Q09130"/>
    </source>
</evidence>
<evidence type="ECO:0000255" key="4">
    <source>
        <dbReference type="PROSITE-ProRule" id="PRU01059"/>
    </source>
</evidence>
<evidence type="ECO:0000269" key="5">
    <source>
    </source>
</evidence>
<evidence type="ECO:0000305" key="6"/>
<evidence type="ECO:0000312" key="7">
    <source>
        <dbReference type="FlyBase" id="FBgn0263740"/>
    </source>
</evidence>
<dbReference type="EC" id="3.6.5.3" evidence="1"/>
<dbReference type="EMBL" id="X80069">
    <property type="protein sequence ID" value="CAA56375.1"/>
    <property type="molecule type" value="mRNA"/>
</dbReference>
<dbReference type="EMBL" id="AJ290956">
    <property type="protein sequence ID" value="CAB93767.1"/>
    <property type="molecule type" value="Genomic_DNA"/>
</dbReference>
<dbReference type="EMBL" id="AE014297">
    <property type="protein sequence ID" value="AAF55153.1"/>
    <property type="molecule type" value="Genomic_DNA"/>
</dbReference>
<dbReference type="EMBL" id="AE014297">
    <property type="protein sequence ID" value="AAN13641.1"/>
    <property type="molecule type" value="Genomic_DNA"/>
</dbReference>
<dbReference type="EMBL" id="AY061102">
    <property type="protein sequence ID" value="AAL28650.1"/>
    <property type="molecule type" value="mRNA"/>
</dbReference>
<dbReference type="PIR" id="S47005">
    <property type="entry name" value="S46941"/>
</dbReference>
<dbReference type="RefSeq" id="NP_001262587.1">
    <molecule id="Q24208-1"/>
    <property type="nucleotide sequence ID" value="NM_001275658.1"/>
</dbReference>
<dbReference type="RefSeq" id="NP_731993.1">
    <molecule id="Q24208-1"/>
    <property type="nucleotide sequence ID" value="NM_169629.2"/>
</dbReference>
<dbReference type="RefSeq" id="NP_731994.1">
    <molecule id="Q24208-2"/>
    <property type="nucleotide sequence ID" value="NM_169630.2"/>
</dbReference>
<dbReference type="SMR" id="Q24208"/>
<dbReference type="BioGRID" id="66907">
    <property type="interactions" value="10"/>
</dbReference>
<dbReference type="FunCoup" id="Q24208">
    <property type="interactions" value="1317"/>
</dbReference>
<dbReference type="STRING" id="7227.FBpp0307983"/>
<dbReference type="PaxDb" id="7227-FBpp0302537"/>
<dbReference type="DNASU" id="41843"/>
<dbReference type="EnsemblMetazoa" id="FBtr0310386">
    <molecule id="Q24208-1"/>
    <property type="protein sequence ID" value="FBpp0302537"/>
    <property type="gene ID" value="FBgn0263740"/>
</dbReference>
<dbReference type="EnsemblMetazoa" id="FBtr0310387">
    <molecule id="Q24208-2"/>
    <property type="protein sequence ID" value="FBpp0302538"/>
    <property type="gene ID" value="FBgn0263740"/>
</dbReference>
<dbReference type="EnsemblMetazoa" id="FBtr0337054">
    <molecule id="Q24208-1"/>
    <property type="protein sequence ID" value="FBpp0307983"/>
    <property type="gene ID" value="FBgn0263740"/>
</dbReference>
<dbReference type="GeneID" id="41843"/>
<dbReference type="KEGG" id="dme:Dmel_CG43665"/>
<dbReference type="AGR" id="FB:FBgn0263740"/>
<dbReference type="CTD" id="41843"/>
<dbReference type="FlyBase" id="FBgn0263740">
    <property type="gene designation" value="eIF2gamma"/>
</dbReference>
<dbReference type="VEuPathDB" id="VectorBase:FBgn0263740"/>
<dbReference type="eggNOG" id="KOG0466">
    <property type="taxonomic scope" value="Eukaryota"/>
</dbReference>
<dbReference type="GeneTree" id="ENSGT00940000172475"/>
<dbReference type="InParanoid" id="Q24208"/>
<dbReference type="OMA" id="NIGMVGH"/>
<dbReference type="OrthoDB" id="1045173at2759"/>
<dbReference type="PhylomeDB" id="Q24208"/>
<dbReference type="Reactome" id="R-DME-156827">
    <property type="pathway name" value="L13a-mediated translational silencing of Ceruloplasmin expression"/>
</dbReference>
<dbReference type="Reactome" id="R-DME-381042">
    <property type="pathway name" value="PERK regulates gene expression"/>
</dbReference>
<dbReference type="Reactome" id="R-DME-382556">
    <property type="pathway name" value="ABC-family proteins mediated transport"/>
</dbReference>
<dbReference type="Reactome" id="R-DME-72649">
    <property type="pathway name" value="Translation initiation complex formation"/>
</dbReference>
<dbReference type="Reactome" id="R-DME-72695">
    <property type="pathway name" value="Formation of the ternary complex, and subsequently, the 43S complex"/>
</dbReference>
<dbReference type="Reactome" id="R-DME-72702">
    <property type="pathway name" value="Ribosomal scanning and start codon recognition"/>
</dbReference>
<dbReference type="Reactome" id="R-DME-72731">
    <property type="pathway name" value="Recycling of eIF2:GDP"/>
</dbReference>
<dbReference type="Reactome" id="R-DME-9840373">
    <property type="pathway name" value="Cellular response to mitochondrial stress"/>
</dbReference>
<dbReference type="BioGRID-ORCS" id="41843">
    <property type="hits" value="1 hit in 3 CRISPR screens"/>
</dbReference>
<dbReference type="GenomeRNAi" id="41843"/>
<dbReference type="PRO" id="PR:Q24208"/>
<dbReference type="Proteomes" id="UP000000803">
    <property type="component" value="Chromosome 3R"/>
</dbReference>
<dbReference type="Bgee" id="FBgn0263740">
    <property type="expression patterns" value="Expressed in egg chamber and 153 other cell types or tissues"/>
</dbReference>
<dbReference type="ExpressionAtlas" id="Q24208">
    <property type="expression patterns" value="baseline and differential"/>
</dbReference>
<dbReference type="GO" id="GO:0005829">
    <property type="term" value="C:cytosol"/>
    <property type="evidence" value="ECO:0007669"/>
    <property type="project" value="UniProtKB-SubCell"/>
</dbReference>
<dbReference type="GO" id="GO:0016282">
    <property type="term" value="C:eukaryotic 43S preinitiation complex"/>
    <property type="evidence" value="ECO:0000250"/>
    <property type="project" value="FlyBase"/>
</dbReference>
<dbReference type="GO" id="GO:0005850">
    <property type="term" value="C:eukaryotic translation initiation factor 2 complex"/>
    <property type="evidence" value="ECO:0000250"/>
    <property type="project" value="UniProtKB"/>
</dbReference>
<dbReference type="GO" id="GO:0043614">
    <property type="term" value="C:multi-eIF complex"/>
    <property type="evidence" value="ECO:0000250"/>
    <property type="project" value="FlyBase"/>
</dbReference>
<dbReference type="GO" id="GO:0005525">
    <property type="term" value="F:GTP binding"/>
    <property type="evidence" value="ECO:0007669"/>
    <property type="project" value="UniProtKB-KW"/>
</dbReference>
<dbReference type="GO" id="GO:0003924">
    <property type="term" value="F:GTPase activity"/>
    <property type="evidence" value="ECO:0007669"/>
    <property type="project" value="InterPro"/>
</dbReference>
<dbReference type="GO" id="GO:1990856">
    <property type="term" value="F:methionyl-initiator methionine tRNA binding"/>
    <property type="evidence" value="ECO:0000250"/>
    <property type="project" value="UniProtKB"/>
</dbReference>
<dbReference type="GO" id="GO:0003743">
    <property type="term" value="F:translation initiation factor activity"/>
    <property type="evidence" value="ECO:0000250"/>
    <property type="project" value="FlyBase"/>
</dbReference>
<dbReference type="GO" id="GO:0002183">
    <property type="term" value="P:cytoplasmic translational initiation"/>
    <property type="evidence" value="ECO:0000250"/>
    <property type="project" value="UniProtKB"/>
</dbReference>
<dbReference type="GO" id="GO:0001731">
    <property type="term" value="P:formation of translation preinitiation complex"/>
    <property type="evidence" value="ECO:0000250"/>
    <property type="project" value="FlyBase"/>
</dbReference>
<dbReference type="CDD" id="cd01888">
    <property type="entry name" value="eIF2_gamma"/>
    <property type="match status" value="1"/>
</dbReference>
<dbReference type="CDD" id="cd03688">
    <property type="entry name" value="eIF2_gamma_II"/>
    <property type="match status" value="1"/>
</dbReference>
<dbReference type="CDD" id="cd15490">
    <property type="entry name" value="eIF2_gamma_III"/>
    <property type="match status" value="1"/>
</dbReference>
<dbReference type="FunFam" id="2.40.30.10:FF:000009">
    <property type="entry name" value="Eukaryotic translation initiation factor 2 subunit gamma"/>
    <property type="match status" value="1"/>
</dbReference>
<dbReference type="FunFam" id="2.40.30.10:FF:000011">
    <property type="entry name" value="Eukaryotic translation initiation factor 2 subunit gamma"/>
    <property type="match status" value="1"/>
</dbReference>
<dbReference type="FunFam" id="3.40.50.300:FF:000065">
    <property type="entry name" value="Eukaryotic translation initiation factor 2 subunit gamma"/>
    <property type="match status" value="1"/>
</dbReference>
<dbReference type="Gene3D" id="3.40.50.300">
    <property type="entry name" value="P-loop containing nucleotide triphosphate hydrolases"/>
    <property type="match status" value="1"/>
</dbReference>
<dbReference type="Gene3D" id="2.40.30.10">
    <property type="entry name" value="Translation factors"/>
    <property type="match status" value="2"/>
</dbReference>
<dbReference type="InterPro" id="IPR004161">
    <property type="entry name" value="EFTu-like_2"/>
</dbReference>
<dbReference type="InterPro" id="IPR050543">
    <property type="entry name" value="eIF2G"/>
</dbReference>
<dbReference type="InterPro" id="IPR015256">
    <property type="entry name" value="eIF2g_C"/>
</dbReference>
<dbReference type="InterPro" id="IPR044127">
    <property type="entry name" value="eIF2g_dom_2"/>
</dbReference>
<dbReference type="InterPro" id="IPR044128">
    <property type="entry name" value="eIF2g_GTP-bd"/>
</dbReference>
<dbReference type="InterPro" id="IPR027417">
    <property type="entry name" value="P-loop_NTPase"/>
</dbReference>
<dbReference type="InterPro" id="IPR000795">
    <property type="entry name" value="T_Tr_GTP-bd_dom"/>
</dbReference>
<dbReference type="InterPro" id="IPR009000">
    <property type="entry name" value="Transl_B-barrel_sf"/>
</dbReference>
<dbReference type="InterPro" id="IPR009001">
    <property type="entry name" value="Transl_elong_EF1A/Init_IF2_C"/>
</dbReference>
<dbReference type="NCBIfam" id="NF003077">
    <property type="entry name" value="PRK04000.1"/>
    <property type="match status" value="1"/>
</dbReference>
<dbReference type="PANTHER" id="PTHR42854">
    <property type="entry name" value="EUKARYOTIC TRANSLATION INITIATION FACTOR 2 SUBUNIT 3 FAMILY MEMBER"/>
    <property type="match status" value="1"/>
</dbReference>
<dbReference type="PANTHER" id="PTHR42854:SF3">
    <property type="entry name" value="EUKARYOTIC TRANSLATION INITIATION FACTOR 2 SUBUNIT 3-RELATED"/>
    <property type="match status" value="1"/>
</dbReference>
<dbReference type="Pfam" id="PF09173">
    <property type="entry name" value="eIF2_C"/>
    <property type="match status" value="1"/>
</dbReference>
<dbReference type="Pfam" id="PF00009">
    <property type="entry name" value="GTP_EFTU"/>
    <property type="match status" value="1"/>
</dbReference>
<dbReference type="Pfam" id="PF03144">
    <property type="entry name" value="GTP_EFTU_D2"/>
    <property type="match status" value="1"/>
</dbReference>
<dbReference type="PRINTS" id="PR00315">
    <property type="entry name" value="ELONGATNFCT"/>
</dbReference>
<dbReference type="SUPFAM" id="SSF50465">
    <property type="entry name" value="EF-Tu/eEF-1alpha/eIF2-gamma C-terminal domain"/>
    <property type="match status" value="1"/>
</dbReference>
<dbReference type="SUPFAM" id="SSF52540">
    <property type="entry name" value="P-loop containing nucleoside triphosphate hydrolases"/>
    <property type="match status" value="1"/>
</dbReference>
<dbReference type="SUPFAM" id="SSF50447">
    <property type="entry name" value="Translation proteins"/>
    <property type="match status" value="1"/>
</dbReference>
<dbReference type="PROSITE" id="PS51722">
    <property type="entry name" value="G_TR_2"/>
    <property type="match status" value="1"/>
</dbReference>
<sequence>MATAEAQIGVNRNLQKQDLSNLDVSKLTPLSPEVISRQATINIGTIGHVAHGKSTVVKAISGVQTVRFKNELERNITIKLGYANAKIYKCDNPKCPRPASFVSDASSKDDSLPCTRLNCSGNFRLVRHVSFVDCPGHDILMATMLNGAAVMDAALLLIAGNESCPQPQTSEHLAAIEIMKLKQILILQNKIDLIKESQAKEQYEEITKFVQGTVAEGAPIIPISAQLKYNIDVLCEYIVNKIPVPPRDFNAPPRLIVIRSFDVNKPGCEVADLKGGVAGGSILSGVLKVGQEIEVRPGVVTKDSDGNITCRPIFSRIVSLFAEQNELQYAVPGGLIGVGTKIDPTLCRADRLVGQVLGAVGQLPDIYQELEISYYLLRRLLGVRTDGDKKGARVEKLQKNEILLVNIGSLSTGGRISATKGDLAKIVLTTPVCTEKGEKIALSRRVENHWRLIGWGQIFGGKTITPVLDSQVAKK</sequence>
<gene>
    <name evidence="7" type="primary">eIF2gamma</name>
    <name type="synonym">eIF-2gamma</name>
    <name type="synonym">eIF2g</name>
    <name evidence="7" type="ORF">CG6476</name>
</gene>
<organism>
    <name type="scientific">Drosophila melanogaster</name>
    <name type="common">Fruit fly</name>
    <dbReference type="NCBI Taxonomy" id="7227"/>
    <lineage>
        <taxon>Eukaryota</taxon>
        <taxon>Metazoa</taxon>
        <taxon>Ecdysozoa</taxon>
        <taxon>Arthropoda</taxon>
        <taxon>Hexapoda</taxon>
        <taxon>Insecta</taxon>
        <taxon>Pterygota</taxon>
        <taxon>Neoptera</taxon>
        <taxon>Endopterygota</taxon>
        <taxon>Diptera</taxon>
        <taxon>Brachycera</taxon>
        <taxon>Muscomorpha</taxon>
        <taxon>Ephydroidea</taxon>
        <taxon>Drosophilidae</taxon>
        <taxon>Drosophila</taxon>
        <taxon>Sophophora</taxon>
    </lineage>
</organism>
<name>IF2G_DROME</name>